<accession>P9WN69</accession>
<accession>L0T6W0</accession>
<accession>P64192</accession>
<accession>P77895</accession>
<gene>
    <name evidence="1 6" type="primary">pgi</name>
    <name type="ordered locus">Rv0946c</name>
    <name type="ORF">MTCY10D7.28</name>
</gene>
<evidence type="ECO:0000255" key="1">
    <source>
        <dbReference type="HAMAP-Rule" id="MF_00473"/>
    </source>
</evidence>
<evidence type="ECO:0000256" key="2">
    <source>
        <dbReference type="SAM" id="MobiDB-lite"/>
    </source>
</evidence>
<evidence type="ECO:0000269" key="3">
    <source>
    </source>
</evidence>
<evidence type="ECO:0000269" key="4">
    <source>
    </source>
</evidence>
<evidence type="ECO:0000269" key="5">
    <source>
    </source>
</evidence>
<evidence type="ECO:0000303" key="6">
    <source>
    </source>
</evidence>
<evidence type="ECO:0007744" key="7">
    <source>
        <dbReference type="PDB" id="2WU8"/>
    </source>
</evidence>
<evidence type="ECO:0007744" key="8">
    <source>
    </source>
</evidence>
<evidence type="ECO:0007829" key="9">
    <source>
        <dbReference type="PDB" id="2WU8"/>
    </source>
</evidence>
<feature type="initiator methionine" description="Removed" evidence="8">
    <location>
        <position position="1"/>
    </location>
</feature>
<feature type="chain" id="PRO_0000180677" description="Glucose-6-phosphate isomerase">
    <location>
        <begin position="2"/>
        <end position="553"/>
    </location>
</feature>
<feature type="region of interest" description="Disordered" evidence="2">
    <location>
        <begin position="524"/>
        <end position="553"/>
    </location>
</feature>
<feature type="compositionally biased region" description="Basic and acidic residues" evidence="2">
    <location>
        <begin position="541"/>
        <end position="553"/>
    </location>
</feature>
<feature type="active site" description="Proton donor" evidence="1">
    <location>
        <position position="357"/>
    </location>
</feature>
<feature type="active site" evidence="1">
    <location>
        <position position="388"/>
    </location>
</feature>
<feature type="active site" evidence="1">
    <location>
        <position position="514"/>
    </location>
</feature>
<feature type="modified residue" description="N-acetylthreonine" evidence="8">
    <location>
        <position position="2"/>
    </location>
</feature>
<feature type="mutagenesis site" description="Loss of activity." evidence="5">
    <original>G</original>
    <variation>Y</variation>
    <location>
        <position position="158"/>
    </location>
</feature>
<feature type="mutagenesis site" description="Decrease in activity." evidence="5">
    <original>T</original>
    <variation>A</variation>
    <location>
        <position position="212"/>
    </location>
</feature>
<feature type="helix" evidence="9">
    <location>
        <begin position="9"/>
        <end position="11"/>
    </location>
</feature>
<feature type="helix" evidence="9">
    <location>
        <begin position="13"/>
        <end position="25"/>
    </location>
</feature>
<feature type="helix" evidence="9">
    <location>
        <begin position="30"/>
        <end position="36"/>
    </location>
</feature>
<feature type="helix" evidence="9">
    <location>
        <begin position="40"/>
        <end position="43"/>
    </location>
</feature>
<feature type="strand" evidence="9">
    <location>
        <begin position="44"/>
        <end position="48"/>
    </location>
</feature>
<feature type="strand" evidence="9">
    <location>
        <begin position="51"/>
        <end position="54"/>
    </location>
</feature>
<feature type="strand" evidence="9">
    <location>
        <begin position="57"/>
        <end position="59"/>
    </location>
</feature>
<feature type="helix" evidence="9">
    <location>
        <begin position="62"/>
        <end position="74"/>
    </location>
</feature>
<feature type="helix" evidence="9">
    <location>
        <begin position="77"/>
        <end position="86"/>
    </location>
</feature>
<feature type="turn" evidence="9">
    <location>
        <begin position="92"/>
        <end position="95"/>
    </location>
</feature>
<feature type="helix" evidence="9">
    <location>
        <begin position="100"/>
        <end position="104"/>
    </location>
</feature>
<feature type="helix" evidence="9">
    <location>
        <begin position="118"/>
        <end position="138"/>
    </location>
</feature>
<feature type="strand" evidence="9">
    <location>
        <begin position="144"/>
        <end position="146"/>
    </location>
</feature>
<feature type="strand" evidence="9">
    <location>
        <begin position="151"/>
        <end position="155"/>
    </location>
</feature>
<feature type="helix" evidence="9">
    <location>
        <begin position="158"/>
        <end position="160"/>
    </location>
</feature>
<feature type="helix" evidence="9">
    <location>
        <begin position="162"/>
        <end position="170"/>
    </location>
</feature>
<feature type="helix" evidence="9">
    <location>
        <begin position="172"/>
        <end position="174"/>
    </location>
</feature>
<feature type="strand" evidence="9">
    <location>
        <begin position="180"/>
        <end position="184"/>
    </location>
</feature>
<feature type="helix" evidence="9">
    <location>
        <begin position="189"/>
        <end position="196"/>
    </location>
</feature>
<feature type="helix" evidence="9">
    <location>
        <begin position="201"/>
        <end position="203"/>
    </location>
</feature>
<feature type="strand" evidence="9">
    <location>
        <begin position="204"/>
        <end position="209"/>
    </location>
</feature>
<feature type="strand" evidence="9">
    <location>
        <begin position="211"/>
        <end position="213"/>
    </location>
</feature>
<feature type="helix" evidence="9">
    <location>
        <begin position="216"/>
        <end position="233"/>
    </location>
</feature>
<feature type="helix" evidence="9">
    <location>
        <begin position="235"/>
        <end position="240"/>
    </location>
</feature>
<feature type="strand" evidence="9">
    <location>
        <begin position="242"/>
        <end position="245"/>
    </location>
</feature>
<feature type="helix" evidence="9">
    <location>
        <begin position="249"/>
        <end position="252"/>
    </location>
</feature>
<feature type="turn" evidence="9">
    <location>
        <begin position="253"/>
        <end position="256"/>
    </location>
</feature>
<feature type="helix" evidence="9">
    <location>
        <begin position="259"/>
        <end position="261"/>
    </location>
</feature>
<feature type="helix" evidence="9">
    <location>
        <begin position="271"/>
        <end position="273"/>
    </location>
</feature>
<feature type="turn" evidence="9">
    <location>
        <begin position="275"/>
        <end position="277"/>
    </location>
</feature>
<feature type="helix" evidence="9">
    <location>
        <begin position="278"/>
        <end position="280"/>
    </location>
</feature>
<feature type="helix" evidence="9">
    <location>
        <begin position="281"/>
        <end position="287"/>
    </location>
</feature>
<feature type="helix" evidence="9">
    <location>
        <begin position="289"/>
        <end position="308"/>
    </location>
</feature>
<feature type="helix" evidence="9">
    <location>
        <begin position="311"/>
        <end position="313"/>
    </location>
</feature>
<feature type="helix" evidence="9">
    <location>
        <begin position="315"/>
        <end position="329"/>
    </location>
</feature>
<feature type="strand" evidence="9">
    <location>
        <begin position="334"/>
        <end position="340"/>
    </location>
</feature>
<feature type="helix" evidence="9">
    <location>
        <begin position="342"/>
        <end position="344"/>
    </location>
</feature>
<feature type="helix" evidence="9">
    <location>
        <begin position="347"/>
        <end position="359"/>
    </location>
</feature>
<feature type="strand" evidence="9">
    <location>
        <begin position="362"/>
        <end position="367"/>
    </location>
</feature>
<feature type="strand" evidence="9">
    <location>
        <begin position="377"/>
        <end position="379"/>
    </location>
</feature>
<feature type="turn" evidence="9">
    <location>
        <begin position="383"/>
        <end position="385"/>
    </location>
</feature>
<feature type="helix" evidence="9">
    <location>
        <begin position="386"/>
        <end position="388"/>
    </location>
</feature>
<feature type="helix" evidence="9">
    <location>
        <begin position="391"/>
        <end position="396"/>
    </location>
</feature>
<feature type="strand" evidence="9">
    <location>
        <begin position="403"/>
        <end position="410"/>
    </location>
</feature>
<feature type="helix" evidence="9">
    <location>
        <begin position="424"/>
        <end position="441"/>
    </location>
</feature>
<feature type="helix" evidence="9">
    <location>
        <begin position="445"/>
        <end position="449"/>
    </location>
</feature>
<feature type="turn" evidence="9">
    <location>
        <begin position="450"/>
        <end position="452"/>
    </location>
</feature>
<feature type="helix" evidence="9">
    <location>
        <begin position="455"/>
        <end position="461"/>
    </location>
</feature>
<feature type="strand" evidence="9">
    <location>
        <begin position="469"/>
        <end position="476"/>
    </location>
</feature>
<feature type="helix" evidence="9">
    <location>
        <begin position="479"/>
        <end position="500"/>
    </location>
</feature>
<feature type="helix" evidence="9">
    <location>
        <begin position="508"/>
        <end position="510"/>
    </location>
</feature>
<feature type="helix" evidence="9">
    <location>
        <begin position="511"/>
        <end position="525"/>
    </location>
</feature>
<feature type="strand" evidence="9">
    <location>
        <begin position="526"/>
        <end position="528"/>
    </location>
</feature>
<feature type="helix" evidence="9">
    <location>
        <begin position="536"/>
        <end position="548"/>
    </location>
</feature>
<proteinExistence type="evidence at protein level"/>
<protein>
    <recommendedName>
        <fullName evidence="1">Glucose-6-phosphate isomerase</fullName>
        <shortName evidence="1">GPI</shortName>
        <ecNumber evidence="1 3 4 5">5.3.1.9</ecNumber>
    </recommendedName>
    <alternativeName>
        <fullName evidence="1 6">Phosphoglucose isomerase</fullName>
        <shortName evidence="1 6">PGI</shortName>
    </alternativeName>
    <alternativeName>
        <fullName evidence="1">Phosphohexose isomerase</fullName>
        <shortName evidence="1">PHI</shortName>
    </alternativeName>
</protein>
<comment type="function">
    <text evidence="1 3 4 5">Catalyzes the reversible isomerization of glucose-6-phosphate to fructose-6-phosphate.</text>
</comment>
<comment type="catalytic activity">
    <reaction evidence="1 3 4 5">
        <text>alpha-D-glucose 6-phosphate = beta-D-fructose 6-phosphate</text>
        <dbReference type="Rhea" id="RHEA:11816"/>
        <dbReference type="ChEBI" id="CHEBI:57634"/>
        <dbReference type="ChEBI" id="CHEBI:58225"/>
        <dbReference type="EC" id="5.3.1.9"/>
    </reaction>
</comment>
<comment type="activity regulation">
    <text evidence="3 4">Activity is decreased in the presence of the PGI inhibitor 6-phosphogluconate (PubMed:16212940, PubMed:17126561). Does not require mono- or divalent cations for activity (PubMed:16212940, PubMed:17126561).</text>
</comment>
<comment type="biophysicochemical properties">
    <kinetics>
        <KM evidence="3">0.318 mM for fructose-6-phosphate</KM>
        <KM evidence="4">0.27 mM for fructose-6-phosphate (for six-histidine-tag protein)</KM>
        <Vmax evidence="3 4">0.032 umol/min/mg enzyme with fructose-6-phosphate as substrate</Vmax>
    </kinetics>
    <phDependence>
        <text evidence="3 4">Optimum pH is 9.0.</text>
    </phDependence>
    <temperatureDependence>
        <text evidence="3 4">Optimum temperature is from 20 to 40 degrees Celsius. Retains full activity up to 50 degrees Celsius (PubMed:16212940). Retains full activity up to 45 degrees Celsius (for six-histidine-tag protein) (PubMed:17126561).</text>
    </temperatureDependence>
</comment>
<comment type="pathway">
    <text evidence="1">Carbohydrate biosynthesis; gluconeogenesis.</text>
</comment>
<comment type="pathway">
    <text evidence="1">Carbohydrate degradation; glycolysis; D-glyceraldehyde 3-phosphate and glycerone phosphate from D-glucose: step 2/4.</text>
</comment>
<comment type="subunit">
    <text evidence="3 5">Homodimer.</text>
</comment>
<comment type="subcellular location">
    <subcellularLocation>
        <location evidence="1">Cytoplasm</location>
    </subcellularLocation>
</comment>
<comment type="similarity">
    <text evidence="1">Belongs to the GPI family.</text>
</comment>
<organism>
    <name type="scientific">Mycobacterium tuberculosis (strain ATCC 25618 / H37Rv)</name>
    <dbReference type="NCBI Taxonomy" id="83332"/>
    <lineage>
        <taxon>Bacteria</taxon>
        <taxon>Bacillati</taxon>
        <taxon>Actinomycetota</taxon>
        <taxon>Actinomycetes</taxon>
        <taxon>Mycobacteriales</taxon>
        <taxon>Mycobacteriaceae</taxon>
        <taxon>Mycobacterium</taxon>
        <taxon>Mycobacterium tuberculosis complex</taxon>
    </lineage>
</organism>
<keyword id="KW-0002">3D-structure</keyword>
<keyword id="KW-0007">Acetylation</keyword>
<keyword id="KW-0963">Cytoplasm</keyword>
<keyword id="KW-0312">Gluconeogenesis</keyword>
<keyword id="KW-0324">Glycolysis</keyword>
<keyword id="KW-0413">Isomerase</keyword>
<keyword id="KW-1185">Reference proteome</keyword>
<dbReference type="EC" id="5.3.1.9" evidence="1 3 4 5"/>
<dbReference type="EMBL" id="AL123456">
    <property type="protein sequence ID" value="CCP43694.1"/>
    <property type="molecule type" value="Genomic_DNA"/>
</dbReference>
<dbReference type="PIR" id="H70715">
    <property type="entry name" value="H70715"/>
</dbReference>
<dbReference type="RefSeq" id="NP_215461.1">
    <property type="nucleotide sequence ID" value="NC_000962.3"/>
</dbReference>
<dbReference type="RefSeq" id="WP_003404830.1">
    <property type="nucleotide sequence ID" value="NZ_NVQJ01000001.1"/>
</dbReference>
<dbReference type="PDB" id="2WU8">
    <property type="method" value="X-ray"/>
    <property type="resolution" value="2.25 A"/>
    <property type="chains" value="A=7-553"/>
</dbReference>
<dbReference type="PDBsum" id="2WU8"/>
<dbReference type="SMR" id="P9WN69"/>
<dbReference type="FunCoup" id="P9WN69">
    <property type="interactions" value="490"/>
</dbReference>
<dbReference type="STRING" id="83332.Rv0946c"/>
<dbReference type="iPTMnet" id="P9WN69"/>
<dbReference type="PaxDb" id="83332-Rv0946c"/>
<dbReference type="DNASU" id="885533"/>
<dbReference type="GeneID" id="45424915"/>
<dbReference type="GeneID" id="885533"/>
<dbReference type="KEGG" id="mtu:Rv0946c"/>
<dbReference type="KEGG" id="mtv:RVBD_0946c"/>
<dbReference type="TubercuList" id="Rv0946c"/>
<dbReference type="eggNOG" id="COG0166">
    <property type="taxonomic scope" value="Bacteria"/>
</dbReference>
<dbReference type="InParanoid" id="P9WN69"/>
<dbReference type="OrthoDB" id="140919at2"/>
<dbReference type="PhylomeDB" id="P9WN69"/>
<dbReference type="BioCyc" id="MetaCyc:G185E-5101-MONOMER"/>
<dbReference type="BRENDA" id="5.3.1.9">
    <property type="organism ID" value="3445"/>
</dbReference>
<dbReference type="SABIO-RK" id="P9WN69"/>
<dbReference type="UniPathway" id="UPA00109">
    <property type="reaction ID" value="UER00181"/>
</dbReference>
<dbReference type="UniPathway" id="UPA00138"/>
<dbReference type="EvolutionaryTrace" id="P9WN69"/>
<dbReference type="Proteomes" id="UP000001584">
    <property type="component" value="Chromosome"/>
</dbReference>
<dbReference type="GO" id="GO:0005829">
    <property type="term" value="C:cytosol"/>
    <property type="evidence" value="ECO:0000318"/>
    <property type="project" value="GO_Central"/>
</dbReference>
<dbReference type="GO" id="GO:0005886">
    <property type="term" value="C:plasma membrane"/>
    <property type="evidence" value="ECO:0007005"/>
    <property type="project" value="MTBBASE"/>
</dbReference>
<dbReference type="GO" id="GO:0097367">
    <property type="term" value="F:carbohydrate derivative binding"/>
    <property type="evidence" value="ECO:0007669"/>
    <property type="project" value="InterPro"/>
</dbReference>
<dbReference type="GO" id="GO:0004347">
    <property type="term" value="F:glucose-6-phosphate isomerase activity"/>
    <property type="evidence" value="ECO:0000314"/>
    <property type="project" value="MTBBASE"/>
</dbReference>
<dbReference type="GO" id="GO:0048029">
    <property type="term" value="F:monosaccharide binding"/>
    <property type="evidence" value="ECO:0000318"/>
    <property type="project" value="GO_Central"/>
</dbReference>
<dbReference type="GO" id="GO:0006094">
    <property type="term" value="P:gluconeogenesis"/>
    <property type="evidence" value="ECO:0000318"/>
    <property type="project" value="GO_Central"/>
</dbReference>
<dbReference type="GO" id="GO:0051156">
    <property type="term" value="P:glucose 6-phosphate metabolic process"/>
    <property type="evidence" value="ECO:0000318"/>
    <property type="project" value="GO_Central"/>
</dbReference>
<dbReference type="GO" id="GO:0006096">
    <property type="term" value="P:glycolytic process"/>
    <property type="evidence" value="ECO:0000314"/>
    <property type="project" value="MTBBASE"/>
</dbReference>
<dbReference type="CDD" id="cd05015">
    <property type="entry name" value="SIS_PGI_1"/>
    <property type="match status" value="1"/>
</dbReference>
<dbReference type="CDD" id="cd05016">
    <property type="entry name" value="SIS_PGI_2"/>
    <property type="match status" value="1"/>
</dbReference>
<dbReference type="FunFam" id="3.40.50.10490:FF:000018">
    <property type="entry name" value="Glucose-6-phosphate isomerase"/>
    <property type="match status" value="1"/>
</dbReference>
<dbReference type="Gene3D" id="1.10.1390.10">
    <property type="match status" value="1"/>
</dbReference>
<dbReference type="Gene3D" id="3.40.50.10490">
    <property type="entry name" value="Glucose-6-phosphate isomerase like protein, domain 1"/>
    <property type="match status" value="2"/>
</dbReference>
<dbReference type="HAMAP" id="MF_00473">
    <property type="entry name" value="G6P_isomerase"/>
    <property type="match status" value="1"/>
</dbReference>
<dbReference type="InterPro" id="IPR001672">
    <property type="entry name" value="G6P_Isomerase"/>
</dbReference>
<dbReference type="InterPro" id="IPR023096">
    <property type="entry name" value="G6P_Isomerase_C"/>
</dbReference>
<dbReference type="InterPro" id="IPR018189">
    <property type="entry name" value="Phosphoglucose_isomerase_CS"/>
</dbReference>
<dbReference type="InterPro" id="IPR046348">
    <property type="entry name" value="SIS_dom_sf"/>
</dbReference>
<dbReference type="InterPro" id="IPR035476">
    <property type="entry name" value="SIS_PGI_1"/>
</dbReference>
<dbReference type="InterPro" id="IPR035482">
    <property type="entry name" value="SIS_PGI_2"/>
</dbReference>
<dbReference type="NCBIfam" id="NF001211">
    <property type="entry name" value="PRK00179.1"/>
    <property type="match status" value="1"/>
</dbReference>
<dbReference type="PANTHER" id="PTHR11469">
    <property type="entry name" value="GLUCOSE-6-PHOSPHATE ISOMERASE"/>
    <property type="match status" value="1"/>
</dbReference>
<dbReference type="PANTHER" id="PTHR11469:SF1">
    <property type="entry name" value="GLUCOSE-6-PHOSPHATE ISOMERASE"/>
    <property type="match status" value="1"/>
</dbReference>
<dbReference type="Pfam" id="PF00342">
    <property type="entry name" value="PGI"/>
    <property type="match status" value="1"/>
</dbReference>
<dbReference type="PRINTS" id="PR00662">
    <property type="entry name" value="G6PISOMERASE"/>
</dbReference>
<dbReference type="SUPFAM" id="SSF53697">
    <property type="entry name" value="SIS domain"/>
    <property type="match status" value="1"/>
</dbReference>
<dbReference type="PROSITE" id="PS00765">
    <property type="entry name" value="P_GLUCOSE_ISOMERASE_1"/>
    <property type="match status" value="1"/>
</dbReference>
<dbReference type="PROSITE" id="PS00174">
    <property type="entry name" value="P_GLUCOSE_ISOMERASE_2"/>
    <property type="match status" value="1"/>
</dbReference>
<dbReference type="PROSITE" id="PS51463">
    <property type="entry name" value="P_GLUCOSE_ISOMERASE_3"/>
    <property type="match status" value="1"/>
</dbReference>
<sequence length="553" mass="59974">MTSAPIPDITATPAWDALRRHHDQIGNTHLRQFFADDPGRGRELTVSVGDLYIDYSKHRVTRETLALLIDLARTAHLEERRDQMFAGVHINTSEDRAVLHTALRLPRDAELVVDGQDVVTDVHAVLDAMGAFTDRLRSGEWTGATGKRISTVVNIGIGGSDLGPVMVYQALRHYADAGISARFVSNVDPADLIATLADLDPATTLFIVASKTFSTLETLTNATAARRWLTDALGDAAVSRHFVAVSTNKRLVDDFGINTDNMFGFWDWVGGRYSVDSAIGLSLMTVIGRDAFADFLAGFHIIDRHFATAPLESNAPVLLGLIGLWYSNFFGAQSRTVLPYSNDLSRFPAYLQQLTMESNGKSTRADGSPVSADTGEIFWGEPGTNGQHAFYQLLHQGTRLVPADFIGFAQPLDDLPTAEGTGSMHDLLMSNFFAQTQVLAFGKTAEEIAADGTPAHVVAHKVMPGNRPSTSILASRLTPSVLGQLIALYEHQVFTEGVVWGIDSFDQWGVELGKTQAKALLPVITGAGSPPPQSDSSTDGLVRRYRTERGRAG</sequence>
<name>G6PI_MYCTU</name>
<reference key="1">
    <citation type="journal article" date="1998" name="Nature">
        <title>Deciphering the biology of Mycobacterium tuberculosis from the complete genome sequence.</title>
        <authorList>
            <person name="Cole S.T."/>
            <person name="Brosch R."/>
            <person name="Parkhill J."/>
            <person name="Garnier T."/>
            <person name="Churcher C.M."/>
            <person name="Harris D.E."/>
            <person name="Gordon S.V."/>
            <person name="Eiglmeier K."/>
            <person name="Gas S."/>
            <person name="Barry C.E. III"/>
            <person name="Tekaia F."/>
            <person name="Badcock K."/>
            <person name="Basham D."/>
            <person name="Brown D."/>
            <person name="Chillingworth T."/>
            <person name="Connor R."/>
            <person name="Davies R.M."/>
            <person name="Devlin K."/>
            <person name="Feltwell T."/>
            <person name="Gentles S."/>
            <person name="Hamlin N."/>
            <person name="Holroyd S."/>
            <person name="Hornsby T."/>
            <person name="Jagels K."/>
            <person name="Krogh A."/>
            <person name="McLean J."/>
            <person name="Moule S."/>
            <person name="Murphy L.D."/>
            <person name="Oliver S."/>
            <person name="Osborne J."/>
            <person name="Quail M.A."/>
            <person name="Rajandream M.A."/>
            <person name="Rogers J."/>
            <person name="Rutter S."/>
            <person name="Seeger K."/>
            <person name="Skelton S."/>
            <person name="Squares S."/>
            <person name="Squares R."/>
            <person name="Sulston J.E."/>
            <person name="Taylor K."/>
            <person name="Whitehead S."/>
            <person name="Barrell B.G."/>
        </authorList>
    </citation>
    <scope>NUCLEOTIDE SEQUENCE [LARGE SCALE GENOMIC DNA]</scope>
    <source>
        <strain>ATCC 25618 / H37Rv</strain>
    </source>
</reference>
<reference key="2">
    <citation type="journal article" date="2005" name="Biochem. Biophys. Res. Commun.">
        <title>Biochemical characterization of recombinant phosphoglucose isomerase of Mycobacterium tuberculosis.</title>
        <authorList>
            <person name="Mathur D."/>
            <person name="Ahsan Z."/>
            <person name="Tiwari M."/>
            <person name="Garg L.C."/>
        </authorList>
    </citation>
    <scope>FUNCTION</scope>
    <scope>CATALYTIC ACTIVITY</scope>
    <scope>ACTIVITY REGULATION</scope>
    <scope>BIOPHYSICOCHEMICAL PROPERTIES</scope>
    <scope>SUBUNIT</scope>
    <source>
        <strain>H37Rv</strain>
    </source>
</reference>
<reference key="3">
    <citation type="journal article" date="2007" name="Protein Expr. Purif.">
        <title>Functional phosphoglucose isomerase from Mycobacterium tuberculosis H37Rv: rapid purification with high yield and purity.</title>
        <authorList>
            <person name="Mathur D."/>
            <person name="Garg L.C."/>
        </authorList>
    </citation>
    <scope>FUNCTION</scope>
    <scope>CATALYTIC ACTIVITY</scope>
    <scope>ACTIVITY REGULATION</scope>
    <scope>BIOPHYSICOCHEMICAL PROPERTIES</scope>
    <source>
        <strain>H37Rv</strain>
    </source>
</reference>
<reference key="4">
    <citation type="journal article" date="2011" name="Mol. Cell. Proteomics">
        <title>Proteogenomic analysis of Mycobacterium tuberculosis by high resolution mass spectrometry.</title>
        <authorList>
            <person name="Kelkar D.S."/>
            <person name="Kumar D."/>
            <person name="Kumar P."/>
            <person name="Balakrishnan L."/>
            <person name="Muthusamy B."/>
            <person name="Yadav A.K."/>
            <person name="Shrivastava P."/>
            <person name="Marimuthu A."/>
            <person name="Anand S."/>
            <person name="Sundaram H."/>
            <person name="Kingsbury R."/>
            <person name="Harsha H.C."/>
            <person name="Nair B."/>
            <person name="Prasad T.S."/>
            <person name="Chauhan D.S."/>
            <person name="Katoch K."/>
            <person name="Katoch V.M."/>
            <person name="Kumar P."/>
            <person name="Chaerkady R."/>
            <person name="Ramachandran S."/>
            <person name="Dash D."/>
            <person name="Pandey A."/>
        </authorList>
    </citation>
    <scope>ACETYLATION [LARGE SCALE ANALYSIS] AT THR-2</scope>
    <scope>CLEAVAGE OF INITIATOR METHIONINE [LARGE SCALE ANALYSIS]</scope>
    <scope>IDENTIFICATION BY MASS SPECTROMETRY [LARGE SCALE ANALYSIS]</scope>
    <source>
        <strain>ATCC 25618 / H37Rv</strain>
    </source>
</reference>
<reference key="5">
    <citation type="journal article" date="2007" name="Acta Crystallogr. F">
        <title>Crystallization and preliminary X-ray characterization of phosphoglucose isomerase from Mycobacterium tuberculosis H37Rv.</title>
        <authorList>
            <person name="Mathur D."/>
            <person name="Anand K."/>
            <person name="Mathur D."/>
            <person name="Jagadish N."/>
            <person name="Suri A."/>
            <person name="Garg L.C."/>
        </authorList>
    </citation>
    <scope>CRYSTALLIZATION</scope>
</reference>
<reference evidence="7" key="6">
    <citation type="journal article" date="2010" name="Acta Crystallogr. F Struct. Biol. Commun.">
        <title>Structural studies of phosphoglucose isomerase from Mycobacterium tuberculosis H37Rv.</title>
        <authorList>
            <person name="Anand K."/>
            <person name="Mathur D."/>
            <person name="Anant A."/>
            <person name="Garg L.C."/>
        </authorList>
    </citation>
    <scope>X-RAY CRYSTALLOGRAPHY (2.25 ANGSTROMS) OF 7-553</scope>
    <scope>FUNCTION</scope>
    <scope>CATALYTIC ACTIVITY</scope>
    <scope>SUBUNIT</scope>
    <scope>MUTAGENESIS OF GLY-158 AND THR-212</scope>
    <source>
        <strain>H37Rv</strain>
    </source>
</reference>